<feature type="chain" id="PRO_0000284805" description="Uncharacterized protein SAB1265c">
    <location>
        <begin position="1"/>
        <end position="263"/>
    </location>
</feature>
<feature type="binding site" evidence="1">
    <location>
        <begin position="31"/>
        <end position="38"/>
    </location>
    <ligand>
        <name>ATP</name>
        <dbReference type="ChEBI" id="CHEBI:30616"/>
    </ligand>
</feature>
<organism>
    <name type="scientific">Staphylococcus aureus (strain bovine RF122 / ET3-1)</name>
    <dbReference type="NCBI Taxonomy" id="273036"/>
    <lineage>
        <taxon>Bacteria</taxon>
        <taxon>Bacillati</taxon>
        <taxon>Bacillota</taxon>
        <taxon>Bacilli</taxon>
        <taxon>Bacillales</taxon>
        <taxon>Staphylococcaceae</taxon>
        <taxon>Staphylococcus</taxon>
    </lineage>
</organism>
<comment type="similarity">
    <text evidence="2">Belongs to the CbbQ/NirQ/NorQ/GpvN family.</text>
</comment>
<protein>
    <recommendedName>
        <fullName>Uncharacterized protein SAB1265c</fullName>
    </recommendedName>
</protein>
<name>Y1265_STAAB</name>
<proteinExistence type="inferred from homology"/>
<sequence length="263" mass="29463">MALKHYKNSDSTVFNDAKALFDLNKNILLKGPTGSGKTKLAETLSEVVDTPMHQVNCSVDLDTESLLGFKTIKTNAEGQQEIVFLDGPVIKAMKEGHILYIDEINMAKPETLPVLNGVLDYRRQITNPYTGEVIKAVPGFNVIAAINEGYVGTLPMNEALKNRFVVIHVDYIDGDILKNVIKEQSLLQDDKQIEQIIKFNEDLRTMSKQGQISEEAASIRALLDLCDLITVMPVERAIKRTIIDKLEDEREQQAIYNAVELNF</sequence>
<evidence type="ECO:0000255" key="1"/>
<evidence type="ECO:0000305" key="2"/>
<dbReference type="EMBL" id="AJ938182">
    <property type="protein sequence ID" value="CAI80954.1"/>
    <property type="molecule type" value="Genomic_DNA"/>
</dbReference>
<dbReference type="RefSeq" id="WP_001185420.1">
    <property type="nucleotide sequence ID" value="NC_007622.1"/>
</dbReference>
<dbReference type="SMR" id="Q2YY09"/>
<dbReference type="KEGG" id="sab:SAB1265c"/>
<dbReference type="HOGENOM" id="CLU_080347_0_0_9"/>
<dbReference type="GO" id="GO:0005524">
    <property type="term" value="F:ATP binding"/>
    <property type="evidence" value="ECO:0007669"/>
    <property type="project" value="UniProtKB-KW"/>
</dbReference>
<dbReference type="GO" id="GO:0016887">
    <property type="term" value="F:ATP hydrolysis activity"/>
    <property type="evidence" value="ECO:0007669"/>
    <property type="project" value="InterPro"/>
</dbReference>
<dbReference type="CDD" id="cd00009">
    <property type="entry name" value="AAA"/>
    <property type="match status" value="1"/>
</dbReference>
<dbReference type="Gene3D" id="3.40.50.300">
    <property type="entry name" value="P-loop containing nucleotide triphosphate hydrolases"/>
    <property type="match status" value="1"/>
</dbReference>
<dbReference type="InterPro" id="IPR011704">
    <property type="entry name" value="ATPase_dyneun-rel_AAA"/>
</dbReference>
<dbReference type="InterPro" id="IPR050764">
    <property type="entry name" value="CbbQ/NirQ/NorQ/GpvN"/>
</dbReference>
<dbReference type="InterPro" id="IPR013615">
    <property type="entry name" value="CbbQ_C"/>
</dbReference>
<dbReference type="InterPro" id="IPR001270">
    <property type="entry name" value="ClpA/B"/>
</dbReference>
<dbReference type="InterPro" id="IPR027417">
    <property type="entry name" value="P-loop_NTPase"/>
</dbReference>
<dbReference type="PANTHER" id="PTHR42759:SF1">
    <property type="entry name" value="MAGNESIUM-CHELATASE SUBUNIT CHLD"/>
    <property type="match status" value="1"/>
</dbReference>
<dbReference type="PANTHER" id="PTHR42759">
    <property type="entry name" value="MOXR FAMILY PROTEIN"/>
    <property type="match status" value="1"/>
</dbReference>
<dbReference type="Pfam" id="PF07728">
    <property type="entry name" value="AAA_5"/>
    <property type="match status" value="1"/>
</dbReference>
<dbReference type="Pfam" id="PF08406">
    <property type="entry name" value="CbbQ_C"/>
    <property type="match status" value="1"/>
</dbReference>
<dbReference type="PRINTS" id="PR00300">
    <property type="entry name" value="CLPPROTEASEA"/>
</dbReference>
<dbReference type="SUPFAM" id="SSF52540">
    <property type="entry name" value="P-loop containing nucleoside triphosphate hydrolases"/>
    <property type="match status" value="1"/>
</dbReference>
<keyword id="KW-0067">ATP-binding</keyword>
<keyword id="KW-0547">Nucleotide-binding</keyword>
<accession>Q2YY09</accession>
<gene>
    <name type="ordered locus">SAB1265c</name>
</gene>
<reference key="1">
    <citation type="journal article" date="2007" name="PLoS ONE">
        <title>Molecular correlates of host specialization in Staphylococcus aureus.</title>
        <authorList>
            <person name="Herron-Olson L."/>
            <person name="Fitzgerald J.R."/>
            <person name="Musser J.M."/>
            <person name="Kapur V."/>
        </authorList>
    </citation>
    <scope>NUCLEOTIDE SEQUENCE [LARGE SCALE GENOMIC DNA]</scope>
    <source>
        <strain>bovine RF122 / ET3-1</strain>
    </source>
</reference>